<evidence type="ECO:0000250" key="1"/>
<evidence type="ECO:0000255" key="2">
    <source>
        <dbReference type="PROSITE-ProRule" id="PRU00507"/>
    </source>
</evidence>
<evidence type="ECO:0000305" key="3"/>
<name>NACA_DICDI</name>
<reference key="1">
    <citation type="journal article" date="2005" name="Nature">
        <title>The genome of the social amoeba Dictyostelium discoideum.</title>
        <authorList>
            <person name="Eichinger L."/>
            <person name="Pachebat J.A."/>
            <person name="Gloeckner G."/>
            <person name="Rajandream M.A."/>
            <person name="Sucgang R."/>
            <person name="Berriman M."/>
            <person name="Song J."/>
            <person name="Olsen R."/>
            <person name="Szafranski K."/>
            <person name="Xu Q."/>
            <person name="Tunggal B."/>
            <person name="Kummerfeld S."/>
            <person name="Madera M."/>
            <person name="Konfortov B.A."/>
            <person name="Rivero F."/>
            <person name="Bankier A.T."/>
            <person name="Lehmann R."/>
            <person name="Hamlin N."/>
            <person name="Davies R."/>
            <person name="Gaudet P."/>
            <person name="Fey P."/>
            <person name="Pilcher K."/>
            <person name="Chen G."/>
            <person name="Saunders D."/>
            <person name="Sodergren E.J."/>
            <person name="Davis P."/>
            <person name="Kerhornou A."/>
            <person name="Nie X."/>
            <person name="Hall N."/>
            <person name="Anjard C."/>
            <person name="Hemphill L."/>
            <person name="Bason N."/>
            <person name="Farbrother P."/>
            <person name="Desany B."/>
            <person name="Just E."/>
            <person name="Morio T."/>
            <person name="Rost R."/>
            <person name="Churcher C.M."/>
            <person name="Cooper J."/>
            <person name="Haydock S."/>
            <person name="van Driessche N."/>
            <person name="Cronin A."/>
            <person name="Goodhead I."/>
            <person name="Muzny D.M."/>
            <person name="Mourier T."/>
            <person name="Pain A."/>
            <person name="Lu M."/>
            <person name="Harper D."/>
            <person name="Lindsay R."/>
            <person name="Hauser H."/>
            <person name="James K.D."/>
            <person name="Quiles M."/>
            <person name="Madan Babu M."/>
            <person name="Saito T."/>
            <person name="Buchrieser C."/>
            <person name="Wardroper A."/>
            <person name="Felder M."/>
            <person name="Thangavelu M."/>
            <person name="Johnson D."/>
            <person name="Knights A."/>
            <person name="Loulseged H."/>
            <person name="Mungall K.L."/>
            <person name="Oliver K."/>
            <person name="Price C."/>
            <person name="Quail M.A."/>
            <person name="Urushihara H."/>
            <person name="Hernandez J."/>
            <person name="Rabbinowitsch E."/>
            <person name="Steffen D."/>
            <person name="Sanders M."/>
            <person name="Ma J."/>
            <person name="Kohara Y."/>
            <person name="Sharp S."/>
            <person name="Simmonds M.N."/>
            <person name="Spiegler S."/>
            <person name="Tivey A."/>
            <person name="Sugano S."/>
            <person name="White B."/>
            <person name="Walker D."/>
            <person name="Woodward J.R."/>
            <person name="Winckler T."/>
            <person name="Tanaka Y."/>
            <person name="Shaulsky G."/>
            <person name="Schleicher M."/>
            <person name="Weinstock G.M."/>
            <person name="Rosenthal A."/>
            <person name="Cox E.C."/>
            <person name="Chisholm R.L."/>
            <person name="Gibbs R.A."/>
            <person name="Loomis W.F."/>
            <person name="Platzer M."/>
            <person name="Kay R.R."/>
            <person name="Williams J.G."/>
            <person name="Dear P.H."/>
            <person name="Noegel A.A."/>
            <person name="Barrell B.G."/>
            <person name="Kuspa A."/>
        </authorList>
    </citation>
    <scope>NUCLEOTIDE SEQUENCE [LARGE SCALE GENOMIC DNA]</scope>
    <source>
        <strain>AX4</strain>
    </source>
</reference>
<proteinExistence type="inferred from homology"/>
<feature type="chain" id="PRO_0000327989" description="Nascent polypeptide-associated complex subunit alpha">
    <location>
        <begin position="1"/>
        <end position="160"/>
    </location>
</feature>
<feature type="domain" description="NAC-A/B" evidence="2">
    <location>
        <begin position="10"/>
        <end position="75"/>
    </location>
</feature>
<feature type="domain" description="UBA">
    <location>
        <begin position="120"/>
        <end position="159"/>
    </location>
</feature>
<sequence>MADSDVKKVTKGEKKTREAMKKLGLAPVSDIFRVTIKQKEGVLVVVAEPEVYASPSGETYVVFGDHSFDDIASRLQKAVPKANVDDIVKAAMPAPTAVKESEESEEIVAQAVDSFDYKGVNPKDVEVVMKETKASREKVVETLIATKNDLVSAVLELTTN</sequence>
<gene>
    <name type="primary">nacA</name>
    <name type="ORF">DDB_G0281403</name>
</gene>
<accession>Q54U07</accession>
<keyword id="KW-0963">Cytoplasm</keyword>
<keyword id="KW-0539">Nucleus</keyword>
<keyword id="KW-0653">Protein transport</keyword>
<keyword id="KW-1185">Reference proteome</keyword>
<keyword id="KW-0804">Transcription</keyword>
<keyword id="KW-0805">Transcription regulation</keyword>
<keyword id="KW-0813">Transport</keyword>
<dbReference type="EMBL" id="AAFI02000041">
    <property type="protein sequence ID" value="EAL66683.1"/>
    <property type="molecule type" value="Genomic_DNA"/>
</dbReference>
<dbReference type="RefSeq" id="XP_640654.1">
    <property type="nucleotide sequence ID" value="XM_635562.1"/>
</dbReference>
<dbReference type="SMR" id="Q54U07"/>
<dbReference type="FunCoup" id="Q54U07">
    <property type="interactions" value="459"/>
</dbReference>
<dbReference type="STRING" id="44689.Q54U07"/>
<dbReference type="PaxDb" id="44689-DDB0233328"/>
<dbReference type="EnsemblProtists" id="EAL66683">
    <property type="protein sequence ID" value="EAL66683"/>
    <property type="gene ID" value="DDB_G0281403"/>
</dbReference>
<dbReference type="GeneID" id="8623038"/>
<dbReference type="KEGG" id="ddi:DDB_G0281403"/>
<dbReference type="dictyBase" id="DDB_G0281403">
    <property type="gene designation" value="nacA"/>
</dbReference>
<dbReference type="VEuPathDB" id="AmoebaDB:DDB_G0281403"/>
<dbReference type="eggNOG" id="KOG2239">
    <property type="taxonomic scope" value="Eukaryota"/>
</dbReference>
<dbReference type="HOGENOM" id="CLU_057806_2_1_1"/>
<dbReference type="InParanoid" id="Q54U07"/>
<dbReference type="OMA" id="SQKMIFA"/>
<dbReference type="PhylomeDB" id="Q54U07"/>
<dbReference type="PRO" id="PR:Q54U07"/>
<dbReference type="Proteomes" id="UP000002195">
    <property type="component" value="Chromosome 3"/>
</dbReference>
<dbReference type="GO" id="GO:0005737">
    <property type="term" value="C:cytoplasm"/>
    <property type="evidence" value="ECO:0000318"/>
    <property type="project" value="GO_Central"/>
</dbReference>
<dbReference type="GO" id="GO:0005854">
    <property type="term" value="C:nascent polypeptide-associated complex"/>
    <property type="evidence" value="ECO:0000250"/>
    <property type="project" value="dictyBase"/>
</dbReference>
<dbReference type="GO" id="GO:0005634">
    <property type="term" value="C:nucleus"/>
    <property type="evidence" value="ECO:0007669"/>
    <property type="project" value="UniProtKB-SubCell"/>
</dbReference>
<dbReference type="GO" id="GO:0051082">
    <property type="term" value="F:unfolded protein binding"/>
    <property type="evidence" value="ECO:0000250"/>
    <property type="project" value="dictyBase"/>
</dbReference>
<dbReference type="GO" id="GO:0006612">
    <property type="term" value="P:protein targeting to membrane"/>
    <property type="evidence" value="ECO:0000318"/>
    <property type="project" value="GO_Central"/>
</dbReference>
<dbReference type="GO" id="GO:0015031">
    <property type="term" value="P:protein transport"/>
    <property type="evidence" value="ECO:0007669"/>
    <property type="project" value="UniProtKB-KW"/>
</dbReference>
<dbReference type="CDD" id="cd22054">
    <property type="entry name" value="NAC_NACA"/>
    <property type="match status" value="1"/>
</dbReference>
<dbReference type="CDD" id="cd14278">
    <property type="entry name" value="UBA_NAC_like"/>
    <property type="match status" value="1"/>
</dbReference>
<dbReference type="Gene3D" id="1.10.8.10">
    <property type="entry name" value="DNA helicase RuvA subunit, C-terminal domain"/>
    <property type="match status" value="1"/>
</dbReference>
<dbReference type="Gene3D" id="2.20.70.30">
    <property type="entry name" value="Nascent polypeptide-associated complex domain"/>
    <property type="match status" value="1"/>
</dbReference>
<dbReference type="InterPro" id="IPR016641">
    <property type="entry name" value="EGD2/NACA0like"/>
</dbReference>
<dbReference type="InterPro" id="IPR044034">
    <property type="entry name" value="NAC-like_UBA"/>
</dbReference>
<dbReference type="InterPro" id="IPR038187">
    <property type="entry name" value="NAC_A/B_dom_sf"/>
</dbReference>
<dbReference type="InterPro" id="IPR002715">
    <property type="entry name" value="Nas_poly-pep-assoc_cplx_dom"/>
</dbReference>
<dbReference type="PANTHER" id="PTHR21713">
    <property type="entry name" value="NASCENT POLYPEPTIDE ASSOCIATED COMPLEX ALPHA SUBUNIT-RELATED"/>
    <property type="match status" value="1"/>
</dbReference>
<dbReference type="Pfam" id="PF01849">
    <property type="entry name" value="NAC"/>
    <property type="match status" value="1"/>
</dbReference>
<dbReference type="Pfam" id="PF19026">
    <property type="entry name" value="UBA_HYPK"/>
    <property type="match status" value="1"/>
</dbReference>
<dbReference type="PIRSF" id="PIRSF015901">
    <property type="entry name" value="NAC_alpha"/>
    <property type="match status" value="1"/>
</dbReference>
<dbReference type="SMART" id="SM01407">
    <property type="entry name" value="NAC"/>
    <property type="match status" value="1"/>
</dbReference>
<dbReference type="PROSITE" id="PS51151">
    <property type="entry name" value="NAC_AB"/>
    <property type="match status" value="1"/>
</dbReference>
<organism>
    <name type="scientific">Dictyostelium discoideum</name>
    <name type="common">Social amoeba</name>
    <dbReference type="NCBI Taxonomy" id="44689"/>
    <lineage>
        <taxon>Eukaryota</taxon>
        <taxon>Amoebozoa</taxon>
        <taxon>Evosea</taxon>
        <taxon>Eumycetozoa</taxon>
        <taxon>Dictyostelia</taxon>
        <taxon>Dictyosteliales</taxon>
        <taxon>Dictyosteliaceae</taxon>
        <taxon>Dictyostelium</taxon>
    </lineage>
</organism>
<protein>
    <recommendedName>
        <fullName>Nascent polypeptide-associated complex subunit alpha</fullName>
        <shortName>NAC-alpha</shortName>
    </recommendedName>
    <alternativeName>
        <fullName>Alpha-NAC</fullName>
    </alternativeName>
</protein>
<comment type="function">
    <text evidence="1">Component of the nascent polypeptide-associated complex (NAC), a dynamic component of the ribosomal exit tunnel, protecting the emerging polypeptides from interaction with other cytoplasmic proteins to ensure appropriate nascent protein targeting. The NAC complex also promotes mitochondrial protein import by enhancing productive ribosome interactions with the outer mitochondrial membrane and blocks the inappropriate interaction of ribosomes translating non-secretory nascent polypeptides with translocation sites in the membrane of the endoplasmic reticulum. May also be involved in transcription regulation (By similarity).</text>
</comment>
<comment type="subunit">
    <text evidence="1">Part of the nascent polypeptide-associated complex (NAC), consisting of nacA and nacB.</text>
</comment>
<comment type="subcellular location">
    <subcellularLocation>
        <location evidence="1">Cytoplasm</location>
    </subcellularLocation>
    <subcellularLocation>
        <location evidence="1">Nucleus</location>
    </subcellularLocation>
</comment>
<comment type="similarity">
    <text evidence="3">Belongs to the NAC-alpha family.</text>
</comment>